<protein>
    <recommendedName>
        <fullName evidence="1">ATP-dependent dethiobiotin synthetase BioD</fullName>
        <ecNumber evidence="1">6.3.3.3</ecNumber>
    </recommendedName>
    <alternativeName>
        <fullName evidence="1">DTB synthetase</fullName>
        <shortName evidence="1">DTBS</shortName>
    </alternativeName>
    <alternativeName>
        <fullName evidence="1">Dethiobiotin synthase</fullName>
    </alternativeName>
</protein>
<comment type="function">
    <text evidence="1">Catalyzes a mechanistically unusual reaction, the ATP-dependent insertion of CO2 between the N7 and N8 nitrogen atoms of 7,8-diaminopelargonic acid (DAPA, also called 7,8-diammoniononanoate) to form a ureido ring.</text>
</comment>
<comment type="catalytic activity">
    <reaction evidence="1">
        <text>(7R,8S)-7,8-diammoniononanoate + CO2 + ATP = (4R,5S)-dethiobiotin + ADP + phosphate + 3 H(+)</text>
        <dbReference type="Rhea" id="RHEA:15805"/>
        <dbReference type="ChEBI" id="CHEBI:15378"/>
        <dbReference type="ChEBI" id="CHEBI:16526"/>
        <dbReference type="ChEBI" id="CHEBI:30616"/>
        <dbReference type="ChEBI" id="CHEBI:43474"/>
        <dbReference type="ChEBI" id="CHEBI:149469"/>
        <dbReference type="ChEBI" id="CHEBI:149473"/>
        <dbReference type="ChEBI" id="CHEBI:456216"/>
        <dbReference type="EC" id="6.3.3.3"/>
    </reaction>
</comment>
<comment type="cofactor">
    <cofactor evidence="1">
        <name>Mg(2+)</name>
        <dbReference type="ChEBI" id="CHEBI:18420"/>
    </cofactor>
</comment>
<comment type="pathway">
    <text evidence="1">Cofactor biosynthesis; biotin biosynthesis; biotin from 7,8-diaminononanoate: step 1/2.</text>
</comment>
<comment type="subunit">
    <text evidence="1">Homodimer.</text>
</comment>
<comment type="subcellular location">
    <subcellularLocation>
        <location evidence="1">Cytoplasm</location>
    </subcellularLocation>
</comment>
<comment type="similarity">
    <text evidence="1">Belongs to the dethiobiotin synthetase family.</text>
</comment>
<organism>
    <name type="scientific">Francisella tularensis subsp. novicida (strain U112)</name>
    <dbReference type="NCBI Taxonomy" id="401614"/>
    <lineage>
        <taxon>Bacteria</taxon>
        <taxon>Pseudomonadati</taxon>
        <taxon>Pseudomonadota</taxon>
        <taxon>Gammaproteobacteria</taxon>
        <taxon>Thiotrichales</taxon>
        <taxon>Francisellaceae</taxon>
        <taxon>Francisella</taxon>
    </lineage>
</organism>
<keyword id="KW-0067">ATP-binding</keyword>
<keyword id="KW-0093">Biotin biosynthesis</keyword>
<keyword id="KW-0963">Cytoplasm</keyword>
<keyword id="KW-0436">Ligase</keyword>
<keyword id="KW-0460">Magnesium</keyword>
<keyword id="KW-0479">Metal-binding</keyword>
<keyword id="KW-0547">Nucleotide-binding</keyword>
<evidence type="ECO:0000255" key="1">
    <source>
        <dbReference type="HAMAP-Rule" id="MF_00336"/>
    </source>
</evidence>
<proteinExistence type="inferred from homology"/>
<sequence>MKKFFIIGTDTEVGKTYISTKLIEVCEHQNIKSLCLKPVASGQSQFSELCEDVESILNAYKHKFTAAEINLISFNQAVAPHIIAAKTKVDISIGNLKQFIENKYNQDLDILFIEGAGGLLTPYSDHTTQLDLIKALEIPVILVSAIKVGCINHTLLTINELGRHNIKLAGWIANCNDSNIKYTDEQISTIEELSGYKCSTKISQNADYLDFIDLSKILISPEENE</sequence>
<accession>A0Q635</accession>
<gene>
    <name evidence="1" type="primary">bioD</name>
    <name type="ordered locus">FTN_0812</name>
</gene>
<reference key="1">
    <citation type="journal article" date="2007" name="Genome Biol.">
        <title>Comparison of Francisella tularensis genomes reveals evolutionary events associated with the emergence of human pathogenic strains.</title>
        <authorList>
            <person name="Rohmer L."/>
            <person name="Fong C."/>
            <person name="Abmayr S."/>
            <person name="Wasnick M."/>
            <person name="Larson Freeman T.J."/>
            <person name="Radey M."/>
            <person name="Guina T."/>
            <person name="Svensson K."/>
            <person name="Hayden H.S."/>
            <person name="Jacobs M."/>
            <person name="Gallagher L.A."/>
            <person name="Manoil C."/>
            <person name="Ernst R.K."/>
            <person name="Drees B."/>
            <person name="Buckley D."/>
            <person name="Haugen E."/>
            <person name="Bovee D."/>
            <person name="Zhou Y."/>
            <person name="Chang J."/>
            <person name="Levy R."/>
            <person name="Lim R."/>
            <person name="Gillett W."/>
            <person name="Guenthener D."/>
            <person name="Kang A."/>
            <person name="Shaffer S.A."/>
            <person name="Taylor G."/>
            <person name="Chen J."/>
            <person name="Gallis B."/>
            <person name="D'Argenio D.A."/>
            <person name="Forsman M."/>
            <person name="Olson M.V."/>
            <person name="Goodlett D.R."/>
            <person name="Kaul R."/>
            <person name="Miller S.I."/>
            <person name="Brittnacher M.J."/>
        </authorList>
    </citation>
    <scope>NUCLEOTIDE SEQUENCE [LARGE SCALE GENOMIC DNA]</scope>
    <source>
        <strain>U112</strain>
    </source>
</reference>
<feature type="chain" id="PRO_0000302507" description="ATP-dependent dethiobiotin synthetase BioD">
    <location>
        <begin position="1"/>
        <end position="225"/>
    </location>
</feature>
<feature type="active site" evidence="1">
    <location>
        <position position="37"/>
    </location>
</feature>
<feature type="binding site" evidence="1">
    <location>
        <begin position="12"/>
        <end position="17"/>
    </location>
    <ligand>
        <name>ATP</name>
        <dbReference type="ChEBI" id="CHEBI:30616"/>
    </ligand>
</feature>
<feature type="binding site" evidence="1">
    <location>
        <position position="16"/>
    </location>
    <ligand>
        <name>Mg(2+)</name>
        <dbReference type="ChEBI" id="CHEBI:18420"/>
    </ligand>
</feature>
<feature type="binding site" evidence="1">
    <location>
        <position position="41"/>
    </location>
    <ligand>
        <name>substrate</name>
    </ligand>
</feature>
<feature type="binding site" evidence="1">
    <location>
        <position position="52"/>
    </location>
    <ligand>
        <name>ATP</name>
        <dbReference type="ChEBI" id="CHEBI:30616"/>
    </ligand>
</feature>
<feature type="binding site" evidence="1">
    <location>
        <position position="52"/>
    </location>
    <ligand>
        <name>Mg(2+)</name>
        <dbReference type="ChEBI" id="CHEBI:18420"/>
    </ligand>
</feature>
<feature type="binding site" evidence="1">
    <location>
        <begin position="114"/>
        <end position="117"/>
    </location>
    <ligand>
        <name>ATP</name>
        <dbReference type="ChEBI" id="CHEBI:30616"/>
    </ligand>
</feature>
<feature type="binding site" evidence="1">
    <location>
        <position position="114"/>
    </location>
    <ligand>
        <name>Mg(2+)</name>
        <dbReference type="ChEBI" id="CHEBI:18420"/>
    </ligand>
</feature>
<feature type="binding site" evidence="1">
    <location>
        <begin position="174"/>
        <end position="175"/>
    </location>
    <ligand>
        <name>ATP</name>
        <dbReference type="ChEBI" id="CHEBI:30616"/>
    </ligand>
</feature>
<name>BIOD_FRATN</name>
<dbReference type="EC" id="6.3.3.3" evidence="1"/>
<dbReference type="EMBL" id="CP000439">
    <property type="protein sequence ID" value="ABK89700.1"/>
    <property type="molecule type" value="Genomic_DNA"/>
</dbReference>
<dbReference type="RefSeq" id="WP_011733645.1">
    <property type="nucleotide sequence ID" value="NC_008601.1"/>
</dbReference>
<dbReference type="SMR" id="A0Q635"/>
<dbReference type="KEGG" id="ftn:FTN_0812"/>
<dbReference type="KEGG" id="ftx:AW25_1208"/>
<dbReference type="BioCyc" id="FTUL401614:G1G75-848-MONOMER"/>
<dbReference type="UniPathway" id="UPA00078">
    <property type="reaction ID" value="UER00161"/>
</dbReference>
<dbReference type="Proteomes" id="UP000000762">
    <property type="component" value="Chromosome"/>
</dbReference>
<dbReference type="GO" id="GO:0005829">
    <property type="term" value="C:cytosol"/>
    <property type="evidence" value="ECO:0007669"/>
    <property type="project" value="TreeGrafter"/>
</dbReference>
<dbReference type="GO" id="GO:0005524">
    <property type="term" value="F:ATP binding"/>
    <property type="evidence" value="ECO:0007669"/>
    <property type="project" value="UniProtKB-UniRule"/>
</dbReference>
<dbReference type="GO" id="GO:0004141">
    <property type="term" value="F:dethiobiotin synthase activity"/>
    <property type="evidence" value="ECO:0007669"/>
    <property type="project" value="UniProtKB-UniRule"/>
</dbReference>
<dbReference type="GO" id="GO:0000287">
    <property type="term" value="F:magnesium ion binding"/>
    <property type="evidence" value="ECO:0007669"/>
    <property type="project" value="UniProtKB-UniRule"/>
</dbReference>
<dbReference type="GO" id="GO:0009102">
    <property type="term" value="P:biotin biosynthetic process"/>
    <property type="evidence" value="ECO:0007669"/>
    <property type="project" value="UniProtKB-UniRule"/>
</dbReference>
<dbReference type="CDD" id="cd03109">
    <property type="entry name" value="DTBS"/>
    <property type="match status" value="1"/>
</dbReference>
<dbReference type="FunFam" id="3.40.50.300:FF:002404">
    <property type="entry name" value="ATP-dependent dethiobiotin synthetase BioD"/>
    <property type="match status" value="1"/>
</dbReference>
<dbReference type="Gene3D" id="3.40.50.300">
    <property type="entry name" value="P-loop containing nucleotide triphosphate hydrolases"/>
    <property type="match status" value="1"/>
</dbReference>
<dbReference type="HAMAP" id="MF_00336">
    <property type="entry name" value="BioD"/>
    <property type="match status" value="1"/>
</dbReference>
<dbReference type="InterPro" id="IPR004472">
    <property type="entry name" value="DTB_synth_BioD"/>
</dbReference>
<dbReference type="InterPro" id="IPR027417">
    <property type="entry name" value="P-loop_NTPase"/>
</dbReference>
<dbReference type="NCBIfam" id="TIGR00347">
    <property type="entry name" value="bioD"/>
    <property type="match status" value="1"/>
</dbReference>
<dbReference type="PANTHER" id="PTHR43210">
    <property type="entry name" value="DETHIOBIOTIN SYNTHETASE"/>
    <property type="match status" value="1"/>
</dbReference>
<dbReference type="PANTHER" id="PTHR43210:SF5">
    <property type="entry name" value="DETHIOBIOTIN SYNTHETASE"/>
    <property type="match status" value="1"/>
</dbReference>
<dbReference type="Pfam" id="PF13500">
    <property type="entry name" value="AAA_26"/>
    <property type="match status" value="1"/>
</dbReference>
<dbReference type="PIRSF" id="PIRSF006755">
    <property type="entry name" value="DTB_synth"/>
    <property type="match status" value="1"/>
</dbReference>
<dbReference type="SUPFAM" id="SSF52540">
    <property type="entry name" value="P-loop containing nucleoside triphosphate hydrolases"/>
    <property type="match status" value="1"/>
</dbReference>